<comment type="function">
    <text evidence="1">Catalyzes the acyloin condensation reaction between C atoms 2 and 3 of pyruvate and glyceraldehyde 3-phosphate to yield 1-deoxy-D-xylulose-5-phosphate (DXP).</text>
</comment>
<comment type="catalytic activity">
    <reaction evidence="1">
        <text>D-glyceraldehyde 3-phosphate + pyruvate + H(+) = 1-deoxy-D-xylulose 5-phosphate + CO2</text>
        <dbReference type="Rhea" id="RHEA:12605"/>
        <dbReference type="ChEBI" id="CHEBI:15361"/>
        <dbReference type="ChEBI" id="CHEBI:15378"/>
        <dbReference type="ChEBI" id="CHEBI:16526"/>
        <dbReference type="ChEBI" id="CHEBI:57792"/>
        <dbReference type="ChEBI" id="CHEBI:59776"/>
        <dbReference type="EC" id="2.2.1.7"/>
    </reaction>
</comment>
<comment type="cofactor">
    <cofactor evidence="1">
        <name>Mg(2+)</name>
        <dbReference type="ChEBI" id="CHEBI:18420"/>
    </cofactor>
    <text evidence="1">Binds 1 Mg(2+) ion per subunit.</text>
</comment>
<comment type="cofactor">
    <cofactor evidence="1">
        <name>thiamine diphosphate</name>
        <dbReference type="ChEBI" id="CHEBI:58937"/>
    </cofactor>
    <text evidence="1">Binds 1 thiamine pyrophosphate per subunit.</text>
</comment>
<comment type="pathway">
    <text evidence="1">Metabolic intermediate biosynthesis; 1-deoxy-D-xylulose 5-phosphate biosynthesis; 1-deoxy-D-xylulose 5-phosphate from D-glyceraldehyde 3-phosphate and pyruvate: step 1/1.</text>
</comment>
<comment type="subunit">
    <text evidence="1">Homodimer.</text>
</comment>
<comment type="similarity">
    <text evidence="1">Belongs to the transketolase family. DXPS subfamily.</text>
</comment>
<gene>
    <name evidence="1" type="primary">dxs</name>
    <name type="ordered locus">Plut_0450</name>
</gene>
<accession>Q3B5P3</accession>
<reference key="1">
    <citation type="submission" date="2005-08" db="EMBL/GenBank/DDBJ databases">
        <title>Complete sequence of Pelodictyon luteolum DSM 273.</title>
        <authorList>
            <consortium name="US DOE Joint Genome Institute"/>
            <person name="Copeland A."/>
            <person name="Lucas S."/>
            <person name="Lapidus A."/>
            <person name="Barry K."/>
            <person name="Detter J.C."/>
            <person name="Glavina T."/>
            <person name="Hammon N."/>
            <person name="Israni S."/>
            <person name="Pitluck S."/>
            <person name="Bryant D."/>
            <person name="Schmutz J."/>
            <person name="Larimer F."/>
            <person name="Land M."/>
            <person name="Kyrpides N."/>
            <person name="Ivanova N."/>
            <person name="Richardson P."/>
        </authorList>
    </citation>
    <scope>NUCLEOTIDE SEQUENCE [LARGE SCALE GENOMIC DNA]</scope>
    <source>
        <strain>DSM 273 / BCRC 81028 / 2530</strain>
    </source>
</reference>
<evidence type="ECO:0000255" key="1">
    <source>
        <dbReference type="HAMAP-Rule" id="MF_00315"/>
    </source>
</evidence>
<protein>
    <recommendedName>
        <fullName evidence="1">1-deoxy-D-xylulose-5-phosphate synthase</fullName>
        <ecNumber evidence="1">2.2.1.7</ecNumber>
    </recommendedName>
    <alternativeName>
        <fullName evidence="1">1-deoxyxylulose-5-phosphate synthase</fullName>
        <shortName evidence="1">DXP synthase</shortName>
        <shortName evidence="1">DXPS</shortName>
    </alternativeName>
</protein>
<sequence length="632" mass="68256">MNDTRPLLDRILSPRDLKKLSTKQLQQLADECRKELIELIAMNGGHFASSLGVTELTVALHHVYNTEEDRIVWDVGHQAYIHKMLTGRRSRMQTNRKYGGIAGFPKIHESPHDAFGTGHASTSISAAAGMAAGRDLKGGREKMVAVIGDGSMTGGMAFEAMNHLGDLKSDVLVILNDNQMAISPSTGGLKNHLVDITLNKTYNKARRLLWNSMSLLNHEGAKNALRRLEDGMKAALTPGAFFEALGLRYFGPIDGHDMGRLVRALKEMHELPNPKLLHVVTTKGKGFLPAEENQSGWHAHSGGFDTTTGMTAKKTGAPDPPKYQEIFGEALVEMALKDPAITAITAAMPSGTSLDLFEKAAPDRFYDVGIAEGHAVTFAAGLALEGLKPVCAIYSTFLQRALDQLIHDVALQNLHVVFAIDRAGLVGEDGPTHHGAFDLSFLHAVPGLTIMAPSDAQELRDMLHTALYHIEGPVAIRYPRGSSGGGPLRKDFTRLEPGRGRIIREGTGPVLFAIGSMVQAAVEAAALLEAEGIKPDIVDMRFLKPLDTALIDRLAASATHIVTIEENSILGGLGSAVSDHLASSPKKTPLLKIGLPDRFITHGSMQDLYRETGLDAAGIAEHVKEFYRTPVH</sequence>
<organism>
    <name type="scientific">Chlorobium luteolum (strain DSM 273 / BCRC 81028 / 2530)</name>
    <name type="common">Pelodictyon luteolum</name>
    <dbReference type="NCBI Taxonomy" id="319225"/>
    <lineage>
        <taxon>Bacteria</taxon>
        <taxon>Pseudomonadati</taxon>
        <taxon>Chlorobiota</taxon>
        <taxon>Chlorobiia</taxon>
        <taxon>Chlorobiales</taxon>
        <taxon>Chlorobiaceae</taxon>
        <taxon>Chlorobium/Pelodictyon group</taxon>
        <taxon>Pelodictyon</taxon>
    </lineage>
</organism>
<feature type="chain" id="PRO_0000256451" description="1-deoxy-D-xylulose-5-phosphate synthase">
    <location>
        <begin position="1"/>
        <end position="632"/>
    </location>
</feature>
<feature type="binding site" evidence="1">
    <location>
        <position position="77"/>
    </location>
    <ligand>
        <name>thiamine diphosphate</name>
        <dbReference type="ChEBI" id="CHEBI:58937"/>
    </ligand>
</feature>
<feature type="binding site" evidence="1">
    <location>
        <begin position="118"/>
        <end position="120"/>
    </location>
    <ligand>
        <name>thiamine diphosphate</name>
        <dbReference type="ChEBI" id="CHEBI:58937"/>
    </ligand>
</feature>
<feature type="binding site" evidence="1">
    <location>
        <position position="149"/>
    </location>
    <ligand>
        <name>Mg(2+)</name>
        <dbReference type="ChEBI" id="CHEBI:18420"/>
    </ligand>
</feature>
<feature type="binding site" evidence="1">
    <location>
        <begin position="150"/>
        <end position="151"/>
    </location>
    <ligand>
        <name>thiamine diphosphate</name>
        <dbReference type="ChEBI" id="CHEBI:58937"/>
    </ligand>
</feature>
<feature type="binding site" evidence="1">
    <location>
        <position position="178"/>
    </location>
    <ligand>
        <name>Mg(2+)</name>
        <dbReference type="ChEBI" id="CHEBI:18420"/>
    </ligand>
</feature>
<feature type="binding site" evidence="1">
    <location>
        <position position="178"/>
    </location>
    <ligand>
        <name>thiamine diphosphate</name>
        <dbReference type="ChEBI" id="CHEBI:58937"/>
    </ligand>
</feature>
<feature type="binding site" evidence="1">
    <location>
        <position position="287"/>
    </location>
    <ligand>
        <name>thiamine diphosphate</name>
        <dbReference type="ChEBI" id="CHEBI:58937"/>
    </ligand>
</feature>
<feature type="binding site" evidence="1">
    <location>
        <position position="372"/>
    </location>
    <ligand>
        <name>thiamine diphosphate</name>
        <dbReference type="ChEBI" id="CHEBI:58937"/>
    </ligand>
</feature>
<keyword id="KW-0414">Isoprene biosynthesis</keyword>
<keyword id="KW-0460">Magnesium</keyword>
<keyword id="KW-0479">Metal-binding</keyword>
<keyword id="KW-1185">Reference proteome</keyword>
<keyword id="KW-0784">Thiamine biosynthesis</keyword>
<keyword id="KW-0786">Thiamine pyrophosphate</keyword>
<keyword id="KW-0808">Transferase</keyword>
<dbReference type="EC" id="2.2.1.7" evidence="1"/>
<dbReference type="EMBL" id="CP000096">
    <property type="protein sequence ID" value="ABB23338.1"/>
    <property type="molecule type" value="Genomic_DNA"/>
</dbReference>
<dbReference type="RefSeq" id="WP_011357213.1">
    <property type="nucleotide sequence ID" value="NC_007512.1"/>
</dbReference>
<dbReference type="SMR" id="Q3B5P3"/>
<dbReference type="STRING" id="319225.Plut_0450"/>
<dbReference type="KEGG" id="plt:Plut_0450"/>
<dbReference type="eggNOG" id="COG1154">
    <property type="taxonomic scope" value="Bacteria"/>
</dbReference>
<dbReference type="HOGENOM" id="CLU_009227_1_4_10"/>
<dbReference type="OrthoDB" id="9803371at2"/>
<dbReference type="UniPathway" id="UPA00064">
    <property type="reaction ID" value="UER00091"/>
</dbReference>
<dbReference type="Proteomes" id="UP000002709">
    <property type="component" value="Chromosome"/>
</dbReference>
<dbReference type="GO" id="GO:0005829">
    <property type="term" value="C:cytosol"/>
    <property type="evidence" value="ECO:0007669"/>
    <property type="project" value="TreeGrafter"/>
</dbReference>
<dbReference type="GO" id="GO:0008661">
    <property type="term" value="F:1-deoxy-D-xylulose-5-phosphate synthase activity"/>
    <property type="evidence" value="ECO:0007669"/>
    <property type="project" value="UniProtKB-UniRule"/>
</dbReference>
<dbReference type="GO" id="GO:0000287">
    <property type="term" value="F:magnesium ion binding"/>
    <property type="evidence" value="ECO:0007669"/>
    <property type="project" value="UniProtKB-UniRule"/>
</dbReference>
<dbReference type="GO" id="GO:0030976">
    <property type="term" value="F:thiamine pyrophosphate binding"/>
    <property type="evidence" value="ECO:0007669"/>
    <property type="project" value="UniProtKB-UniRule"/>
</dbReference>
<dbReference type="GO" id="GO:0052865">
    <property type="term" value="P:1-deoxy-D-xylulose 5-phosphate biosynthetic process"/>
    <property type="evidence" value="ECO:0007669"/>
    <property type="project" value="UniProtKB-UniPathway"/>
</dbReference>
<dbReference type="GO" id="GO:0019288">
    <property type="term" value="P:isopentenyl diphosphate biosynthetic process, methylerythritol 4-phosphate pathway"/>
    <property type="evidence" value="ECO:0007669"/>
    <property type="project" value="TreeGrafter"/>
</dbReference>
<dbReference type="GO" id="GO:0016114">
    <property type="term" value="P:terpenoid biosynthetic process"/>
    <property type="evidence" value="ECO:0007669"/>
    <property type="project" value="UniProtKB-UniRule"/>
</dbReference>
<dbReference type="GO" id="GO:0009228">
    <property type="term" value="P:thiamine biosynthetic process"/>
    <property type="evidence" value="ECO:0007669"/>
    <property type="project" value="UniProtKB-UniRule"/>
</dbReference>
<dbReference type="CDD" id="cd02007">
    <property type="entry name" value="TPP_DXS"/>
    <property type="match status" value="1"/>
</dbReference>
<dbReference type="CDD" id="cd07033">
    <property type="entry name" value="TPP_PYR_DXS_TK_like"/>
    <property type="match status" value="1"/>
</dbReference>
<dbReference type="FunFam" id="3.40.50.920:FF:000002">
    <property type="entry name" value="1-deoxy-D-xylulose-5-phosphate synthase"/>
    <property type="match status" value="1"/>
</dbReference>
<dbReference type="FunFam" id="3.40.50.970:FF:000005">
    <property type="entry name" value="1-deoxy-D-xylulose-5-phosphate synthase"/>
    <property type="match status" value="1"/>
</dbReference>
<dbReference type="Gene3D" id="3.40.50.920">
    <property type="match status" value="1"/>
</dbReference>
<dbReference type="Gene3D" id="3.40.50.970">
    <property type="match status" value="2"/>
</dbReference>
<dbReference type="HAMAP" id="MF_00315">
    <property type="entry name" value="DXP_synth"/>
    <property type="match status" value="1"/>
</dbReference>
<dbReference type="InterPro" id="IPR005477">
    <property type="entry name" value="Dxylulose-5-P_synthase"/>
</dbReference>
<dbReference type="InterPro" id="IPR029061">
    <property type="entry name" value="THDP-binding"/>
</dbReference>
<dbReference type="InterPro" id="IPR009014">
    <property type="entry name" value="Transketo_C/PFOR_II"/>
</dbReference>
<dbReference type="InterPro" id="IPR005475">
    <property type="entry name" value="Transketolase-like_Pyr-bd"/>
</dbReference>
<dbReference type="InterPro" id="IPR033248">
    <property type="entry name" value="Transketolase_C"/>
</dbReference>
<dbReference type="InterPro" id="IPR049557">
    <property type="entry name" value="Transketolase_CS"/>
</dbReference>
<dbReference type="NCBIfam" id="TIGR00204">
    <property type="entry name" value="dxs"/>
    <property type="match status" value="1"/>
</dbReference>
<dbReference type="NCBIfam" id="NF003933">
    <property type="entry name" value="PRK05444.2-2"/>
    <property type="match status" value="1"/>
</dbReference>
<dbReference type="PANTHER" id="PTHR43322">
    <property type="entry name" value="1-D-DEOXYXYLULOSE 5-PHOSPHATE SYNTHASE-RELATED"/>
    <property type="match status" value="1"/>
</dbReference>
<dbReference type="PANTHER" id="PTHR43322:SF5">
    <property type="entry name" value="1-DEOXY-D-XYLULOSE-5-PHOSPHATE SYNTHASE, CHLOROPLASTIC"/>
    <property type="match status" value="1"/>
</dbReference>
<dbReference type="Pfam" id="PF13292">
    <property type="entry name" value="DXP_synthase_N"/>
    <property type="match status" value="1"/>
</dbReference>
<dbReference type="Pfam" id="PF02779">
    <property type="entry name" value="Transket_pyr"/>
    <property type="match status" value="1"/>
</dbReference>
<dbReference type="Pfam" id="PF02780">
    <property type="entry name" value="Transketolase_C"/>
    <property type="match status" value="1"/>
</dbReference>
<dbReference type="SMART" id="SM00861">
    <property type="entry name" value="Transket_pyr"/>
    <property type="match status" value="1"/>
</dbReference>
<dbReference type="SUPFAM" id="SSF52518">
    <property type="entry name" value="Thiamin diphosphate-binding fold (THDP-binding)"/>
    <property type="match status" value="2"/>
</dbReference>
<dbReference type="SUPFAM" id="SSF52922">
    <property type="entry name" value="TK C-terminal domain-like"/>
    <property type="match status" value="1"/>
</dbReference>
<dbReference type="PROSITE" id="PS00801">
    <property type="entry name" value="TRANSKETOLASE_1"/>
    <property type="match status" value="1"/>
</dbReference>
<name>DXS_CHLL3</name>
<proteinExistence type="inferred from homology"/>